<dbReference type="EMBL" id="AK172835">
    <property type="protein sequence ID" value="BAD18800.1"/>
    <property type="molecule type" value="mRNA"/>
</dbReference>
<dbReference type="EMBL" id="AK290400">
    <property type="protein sequence ID" value="BAF83089.1"/>
    <property type="molecule type" value="mRNA"/>
</dbReference>
<dbReference type="EMBL" id="AK290402">
    <property type="protein sequence ID" value="BAF83091.1"/>
    <property type="molecule type" value="mRNA"/>
</dbReference>
<dbReference type="EMBL" id="AK301189">
    <property type="protein sequence ID" value="BAG62771.1"/>
    <property type="molecule type" value="mRNA"/>
</dbReference>
<dbReference type="EMBL" id="AC087685">
    <property type="status" value="NOT_ANNOTATED_CDS"/>
    <property type="molecule type" value="Genomic_DNA"/>
</dbReference>
<dbReference type="EMBL" id="CH471088">
    <property type="protein sequence ID" value="EAX01463.1"/>
    <property type="molecule type" value="Genomic_DNA"/>
</dbReference>
<dbReference type="CCDS" id="CCDS32819.1">
    <molecule id="Q6ZMC9-1"/>
</dbReference>
<dbReference type="RefSeq" id="NP_998767.1">
    <molecule id="Q6ZMC9-1"/>
    <property type="nucleotide sequence ID" value="NM_213602.3"/>
</dbReference>
<dbReference type="PDB" id="7ZOZ">
    <property type="method" value="X-ray"/>
    <property type="resolution" value="2.10 A"/>
    <property type="chains" value="A=20-328"/>
</dbReference>
<dbReference type="PDBsum" id="7ZOZ"/>
<dbReference type="SMR" id="Q6ZMC9"/>
<dbReference type="BioGRID" id="129810">
    <property type="interactions" value="1"/>
</dbReference>
<dbReference type="FunCoup" id="Q6ZMC9">
    <property type="interactions" value="890"/>
</dbReference>
<dbReference type="STRING" id="9606.ENSP00000374125"/>
<dbReference type="ChEMBL" id="CHEMBL4523355"/>
<dbReference type="UniLectin" id="Q6ZMC9"/>
<dbReference type="GlyCosmos" id="Q6ZMC9">
    <property type="glycosylation" value="1 site, No reported glycans"/>
</dbReference>
<dbReference type="GlyGen" id="Q6ZMC9">
    <property type="glycosylation" value="2 sites"/>
</dbReference>
<dbReference type="iPTMnet" id="Q6ZMC9"/>
<dbReference type="PhosphoSitePlus" id="Q6ZMC9"/>
<dbReference type="BioMuta" id="SIGLEC15"/>
<dbReference type="DMDM" id="74762385"/>
<dbReference type="PaxDb" id="9606-ENSP00000374125"/>
<dbReference type="PeptideAtlas" id="Q6ZMC9"/>
<dbReference type="ABCD" id="Q6ZMC9">
    <property type="antibodies" value="1 sequenced antibody"/>
</dbReference>
<dbReference type="Antibodypedia" id="60463">
    <property type="antibodies" value="282 antibodies from 24 providers"/>
</dbReference>
<dbReference type="DNASU" id="284266"/>
<dbReference type="Ensembl" id="ENST00000389474.8">
    <molecule id="Q6ZMC9-1"/>
    <property type="protein sequence ID" value="ENSP00000374125.2"/>
    <property type="gene ID" value="ENSG00000197046.12"/>
</dbReference>
<dbReference type="Ensembl" id="ENST00000546268.5">
    <molecule id="Q6ZMC9-2"/>
    <property type="protein sequence ID" value="ENSP00000443509.1"/>
    <property type="gene ID" value="ENSG00000197046.12"/>
</dbReference>
<dbReference type="GeneID" id="284266"/>
<dbReference type="KEGG" id="hsa:284266"/>
<dbReference type="MANE-Select" id="ENST00000389474.8">
    <property type="protein sequence ID" value="ENSP00000374125.2"/>
    <property type="RefSeq nucleotide sequence ID" value="NM_213602.3"/>
    <property type="RefSeq protein sequence ID" value="NP_998767.1"/>
</dbReference>
<dbReference type="UCSC" id="uc002lbl.2">
    <molecule id="Q6ZMC9-1"/>
    <property type="organism name" value="human"/>
</dbReference>
<dbReference type="AGR" id="HGNC:27596"/>
<dbReference type="CTD" id="284266"/>
<dbReference type="DisGeNET" id="284266"/>
<dbReference type="GeneCards" id="SIGLEC15"/>
<dbReference type="HGNC" id="HGNC:27596">
    <property type="gene designation" value="SIGLEC15"/>
</dbReference>
<dbReference type="HPA" id="ENSG00000197046">
    <property type="expression patterns" value="Tissue enhanced (breast, intestine, stomach, urinary bladder)"/>
</dbReference>
<dbReference type="MIM" id="618105">
    <property type="type" value="gene"/>
</dbReference>
<dbReference type="neXtProt" id="NX_Q6ZMC9"/>
<dbReference type="OpenTargets" id="ENSG00000197046"/>
<dbReference type="PharmGKB" id="PA162403350"/>
<dbReference type="VEuPathDB" id="HostDB:ENSG00000197046"/>
<dbReference type="eggNOG" id="ENOG502RFMV">
    <property type="taxonomic scope" value="Eukaryota"/>
</dbReference>
<dbReference type="GeneTree" id="ENSGT01080000257333"/>
<dbReference type="HOGENOM" id="CLU_076258_0_0_1"/>
<dbReference type="InParanoid" id="Q6ZMC9"/>
<dbReference type="OMA" id="SNRYFCR"/>
<dbReference type="OrthoDB" id="6152887at2759"/>
<dbReference type="PAN-GO" id="Q6ZMC9">
    <property type="GO annotations" value="4 GO annotations based on evolutionary models"/>
</dbReference>
<dbReference type="PhylomeDB" id="Q6ZMC9"/>
<dbReference type="TreeFam" id="TF351096"/>
<dbReference type="PathwayCommons" id="Q6ZMC9"/>
<dbReference type="Reactome" id="R-HSA-2172127">
    <property type="pathway name" value="DAP12 interactions"/>
</dbReference>
<dbReference type="BioGRID-ORCS" id="284266">
    <property type="hits" value="14 hits in 1148 CRISPR screens"/>
</dbReference>
<dbReference type="GenomeRNAi" id="284266"/>
<dbReference type="Pharos" id="Q6ZMC9">
    <property type="development level" value="Tbio"/>
</dbReference>
<dbReference type="PRO" id="PR:Q6ZMC9"/>
<dbReference type="Proteomes" id="UP000005640">
    <property type="component" value="Chromosome 18"/>
</dbReference>
<dbReference type="RNAct" id="Q6ZMC9">
    <property type="molecule type" value="protein"/>
</dbReference>
<dbReference type="Bgee" id="ENSG00000197046">
    <property type="expression patterns" value="Expressed in jejunal mucosa and 103 other cell types or tissues"/>
</dbReference>
<dbReference type="ExpressionAtlas" id="Q6ZMC9">
    <property type="expression patterns" value="baseline and differential"/>
</dbReference>
<dbReference type="GO" id="GO:0005886">
    <property type="term" value="C:plasma membrane"/>
    <property type="evidence" value="ECO:0000318"/>
    <property type="project" value="GO_Central"/>
</dbReference>
<dbReference type="GO" id="GO:0032991">
    <property type="term" value="C:protein-containing complex"/>
    <property type="evidence" value="ECO:0007669"/>
    <property type="project" value="Ensembl"/>
</dbReference>
<dbReference type="GO" id="GO:0032956">
    <property type="term" value="P:regulation of actin cytoskeleton organization"/>
    <property type="evidence" value="ECO:0000318"/>
    <property type="project" value="GO_Central"/>
</dbReference>
<dbReference type="GO" id="GO:0045124">
    <property type="term" value="P:regulation of bone resorption"/>
    <property type="evidence" value="ECO:0000318"/>
    <property type="project" value="GO_Central"/>
</dbReference>
<dbReference type="GO" id="GO:2001204">
    <property type="term" value="P:regulation of osteoclast development"/>
    <property type="evidence" value="ECO:0000318"/>
    <property type="project" value="GO_Central"/>
</dbReference>
<dbReference type="FunFam" id="2.60.40.10:FF:001464">
    <property type="entry name" value="Sialic acid binding Ig like lectin 15"/>
    <property type="match status" value="1"/>
</dbReference>
<dbReference type="FunFam" id="2.60.40.10:FF:002935">
    <property type="entry name" value="Sialic acid-binding Ig-like lectin 15"/>
    <property type="match status" value="1"/>
</dbReference>
<dbReference type="Gene3D" id="2.60.40.10">
    <property type="entry name" value="Immunoglobulins"/>
    <property type="match status" value="2"/>
</dbReference>
<dbReference type="InterPro" id="IPR007110">
    <property type="entry name" value="Ig-like_dom"/>
</dbReference>
<dbReference type="InterPro" id="IPR036179">
    <property type="entry name" value="Ig-like_dom_sf"/>
</dbReference>
<dbReference type="InterPro" id="IPR013783">
    <property type="entry name" value="Ig-like_fold"/>
</dbReference>
<dbReference type="InterPro" id="IPR003599">
    <property type="entry name" value="Ig_sub"/>
</dbReference>
<dbReference type="InterPro" id="IPR013106">
    <property type="entry name" value="Ig_V-set"/>
</dbReference>
<dbReference type="InterPro" id="IPR042836">
    <property type="entry name" value="SIG15"/>
</dbReference>
<dbReference type="PANTHER" id="PTHR46942">
    <property type="entry name" value="SIALIC ACID-BINDING IG-LIKE LECTIN 15"/>
    <property type="match status" value="1"/>
</dbReference>
<dbReference type="PANTHER" id="PTHR46942:SF1">
    <property type="entry name" value="SIALIC ACID-BINDING IG-LIKE LECTIN 15"/>
    <property type="match status" value="1"/>
</dbReference>
<dbReference type="Pfam" id="PF07686">
    <property type="entry name" value="V-set"/>
    <property type="match status" value="1"/>
</dbReference>
<dbReference type="SMART" id="SM00409">
    <property type="entry name" value="IG"/>
    <property type="match status" value="1"/>
</dbReference>
<dbReference type="SUPFAM" id="SSF48726">
    <property type="entry name" value="Immunoglobulin"/>
    <property type="match status" value="2"/>
</dbReference>
<dbReference type="PROSITE" id="PS50835">
    <property type="entry name" value="IG_LIKE"/>
    <property type="match status" value="1"/>
</dbReference>
<name>SIG15_HUMAN</name>
<evidence type="ECO:0000250" key="1"/>
<evidence type="ECO:0000255" key="2"/>
<evidence type="ECO:0000255" key="3">
    <source>
        <dbReference type="PROSITE-ProRule" id="PRU00114"/>
    </source>
</evidence>
<evidence type="ECO:0000256" key="4">
    <source>
        <dbReference type="SAM" id="MobiDB-lite"/>
    </source>
</evidence>
<evidence type="ECO:0000269" key="5">
    <source>
    </source>
</evidence>
<evidence type="ECO:0000303" key="6">
    <source>
    </source>
</evidence>
<evidence type="ECO:0000305" key="7"/>
<evidence type="ECO:0007829" key="8">
    <source>
        <dbReference type="PDB" id="7ZOZ"/>
    </source>
</evidence>
<reference key="1">
    <citation type="journal article" date="2004" name="Nat. Genet.">
        <title>Complete sequencing and characterization of 21,243 full-length human cDNAs.</title>
        <authorList>
            <person name="Ota T."/>
            <person name="Suzuki Y."/>
            <person name="Nishikawa T."/>
            <person name="Otsuki T."/>
            <person name="Sugiyama T."/>
            <person name="Irie R."/>
            <person name="Wakamatsu A."/>
            <person name="Hayashi K."/>
            <person name="Sato H."/>
            <person name="Nagai K."/>
            <person name="Kimura K."/>
            <person name="Makita H."/>
            <person name="Sekine M."/>
            <person name="Obayashi M."/>
            <person name="Nishi T."/>
            <person name="Shibahara T."/>
            <person name="Tanaka T."/>
            <person name="Ishii S."/>
            <person name="Yamamoto J."/>
            <person name="Saito K."/>
            <person name="Kawai Y."/>
            <person name="Isono Y."/>
            <person name="Nakamura Y."/>
            <person name="Nagahari K."/>
            <person name="Murakami K."/>
            <person name="Yasuda T."/>
            <person name="Iwayanagi T."/>
            <person name="Wagatsuma M."/>
            <person name="Shiratori A."/>
            <person name="Sudo H."/>
            <person name="Hosoiri T."/>
            <person name="Kaku Y."/>
            <person name="Kodaira H."/>
            <person name="Kondo H."/>
            <person name="Sugawara M."/>
            <person name="Takahashi M."/>
            <person name="Kanda K."/>
            <person name="Yokoi T."/>
            <person name="Furuya T."/>
            <person name="Kikkawa E."/>
            <person name="Omura Y."/>
            <person name="Abe K."/>
            <person name="Kamihara K."/>
            <person name="Katsuta N."/>
            <person name="Sato K."/>
            <person name="Tanikawa M."/>
            <person name="Yamazaki M."/>
            <person name="Ninomiya K."/>
            <person name="Ishibashi T."/>
            <person name="Yamashita H."/>
            <person name="Murakawa K."/>
            <person name="Fujimori K."/>
            <person name="Tanai H."/>
            <person name="Kimata M."/>
            <person name="Watanabe M."/>
            <person name="Hiraoka S."/>
            <person name="Chiba Y."/>
            <person name="Ishida S."/>
            <person name="Ono Y."/>
            <person name="Takiguchi S."/>
            <person name="Watanabe S."/>
            <person name="Yosida M."/>
            <person name="Hotuta T."/>
            <person name="Kusano J."/>
            <person name="Kanehori K."/>
            <person name="Takahashi-Fujii A."/>
            <person name="Hara H."/>
            <person name="Tanase T.-O."/>
            <person name="Nomura Y."/>
            <person name="Togiya S."/>
            <person name="Komai F."/>
            <person name="Hara R."/>
            <person name="Takeuchi K."/>
            <person name="Arita M."/>
            <person name="Imose N."/>
            <person name="Musashino K."/>
            <person name="Yuuki H."/>
            <person name="Oshima A."/>
            <person name="Sasaki N."/>
            <person name="Aotsuka S."/>
            <person name="Yoshikawa Y."/>
            <person name="Matsunawa H."/>
            <person name="Ichihara T."/>
            <person name="Shiohata N."/>
            <person name="Sano S."/>
            <person name="Moriya S."/>
            <person name="Momiyama H."/>
            <person name="Satoh N."/>
            <person name="Takami S."/>
            <person name="Terashima Y."/>
            <person name="Suzuki O."/>
            <person name="Nakagawa S."/>
            <person name="Senoh A."/>
            <person name="Mizoguchi H."/>
            <person name="Goto Y."/>
            <person name="Shimizu F."/>
            <person name="Wakebe H."/>
            <person name="Hishigaki H."/>
            <person name="Watanabe T."/>
            <person name="Sugiyama A."/>
            <person name="Takemoto M."/>
            <person name="Kawakami B."/>
            <person name="Yamazaki M."/>
            <person name="Watanabe K."/>
            <person name="Kumagai A."/>
            <person name="Itakura S."/>
            <person name="Fukuzumi Y."/>
            <person name="Fujimori Y."/>
            <person name="Komiyama M."/>
            <person name="Tashiro H."/>
            <person name="Tanigami A."/>
            <person name="Fujiwara T."/>
            <person name="Ono T."/>
            <person name="Yamada K."/>
            <person name="Fujii Y."/>
            <person name="Ozaki K."/>
            <person name="Hirao M."/>
            <person name="Ohmori Y."/>
            <person name="Kawabata A."/>
            <person name="Hikiji T."/>
            <person name="Kobatake N."/>
            <person name="Inagaki H."/>
            <person name="Ikema Y."/>
            <person name="Okamoto S."/>
            <person name="Okitani R."/>
            <person name="Kawakami T."/>
            <person name="Noguchi S."/>
            <person name="Itoh T."/>
            <person name="Shigeta K."/>
            <person name="Senba T."/>
            <person name="Matsumura K."/>
            <person name="Nakajima Y."/>
            <person name="Mizuno T."/>
            <person name="Morinaga M."/>
            <person name="Sasaki M."/>
            <person name="Togashi T."/>
            <person name="Oyama M."/>
            <person name="Hata H."/>
            <person name="Watanabe M."/>
            <person name="Komatsu T."/>
            <person name="Mizushima-Sugano J."/>
            <person name="Satoh T."/>
            <person name="Shirai Y."/>
            <person name="Takahashi Y."/>
            <person name="Nakagawa K."/>
            <person name="Okumura K."/>
            <person name="Nagase T."/>
            <person name="Nomura N."/>
            <person name="Kikuchi H."/>
            <person name="Masuho Y."/>
            <person name="Yamashita R."/>
            <person name="Nakai K."/>
            <person name="Yada T."/>
            <person name="Nakamura Y."/>
            <person name="Ohara O."/>
            <person name="Isogai T."/>
            <person name="Sugano S."/>
        </authorList>
    </citation>
    <scope>NUCLEOTIDE SEQUENCE [LARGE SCALE MRNA] (ISOFORMS 1 AND 2)</scope>
    <source>
        <tissue>Spleen</tissue>
        <tissue>Umbilical cord blood</tissue>
    </source>
</reference>
<reference key="2">
    <citation type="journal article" date="2005" name="Nature">
        <title>DNA sequence and analysis of human chromosome 18.</title>
        <authorList>
            <person name="Nusbaum C."/>
            <person name="Zody M.C."/>
            <person name="Borowsky M.L."/>
            <person name="Kamal M."/>
            <person name="Kodira C.D."/>
            <person name="Taylor T.D."/>
            <person name="Whittaker C.A."/>
            <person name="Chang J.L."/>
            <person name="Cuomo C.A."/>
            <person name="Dewar K."/>
            <person name="FitzGerald M.G."/>
            <person name="Yang X."/>
            <person name="Abouelleil A."/>
            <person name="Allen N.R."/>
            <person name="Anderson S."/>
            <person name="Bloom T."/>
            <person name="Bugalter B."/>
            <person name="Butler J."/>
            <person name="Cook A."/>
            <person name="DeCaprio D."/>
            <person name="Engels R."/>
            <person name="Garber M."/>
            <person name="Gnirke A."/>
            <person name="Hafez N."/>
            <person name="Hall J.L."/>
            <person name="Norman C.H."/>
            <person name="Itoh T."/>
            <person name="Jaffe D.B."/>
            <person name="Kuroki Y."/>
            <person name="Lehoczky J."/>
            <person name="Lui A."/>
            <person name="Macdonald P."/>
            <person name="Mauceli E."/>
            <person name="Mikkelsen T.S."/>
            <person name="Naylor J.W."/>
            <person name="Nicol R."/>
            <person name="Nguyen C."/>
            <person name="Noguchi H."/>
            <person name="O'Leary S.B."/>
            <person name="Piqani B."/>
            <person name="Smith C.L."/>
            <person name="Talamas J.A."/>
            <person name="Topham K."/>
            <person name="Totoki Y."/>
            <person name="Toyoda A."/>
            <person name="Wain H.M."/>
            <person name="Young S.K."/>
            <person name="Zeng Q."/>
            <person name="Zimmer A.R."/>
            <person name="Fujiyama A."/>
            <person name="Hattori M."/>
            <person name="Birren B.W."/>
            <person name="Sakaki Y."/>
            <person name="Lander E.S."/>
        </authorList>
    </citation>
    <scope>NUCLEOTIDE SEQUENCE [LARGE SCALE GENOMIC DNA]</scope>
</reference>
<reference key="3">
    <citation type="submission" date="2005-07" db="EMBL/GenBank/DDBJ databases">
        <authorList>
            <person name="Mural R.J."/>
            <person name="Istrail S."/>
            <person name="Sutton G.G."/>
            <person name="Florea L."/>
            <person name="Halpern A.L."/>
            <person name="Mobarry C.M."/>
            <person name="Lippert R."/>
            <person name="Walenz B."/>
            <person name="Shatkay H."/>
            <person name="Dew I."/>
            <person name="Miller J.R."/>
            <person name="Flanigan M.J."/>
            <person name="Edwards N.J."/>
            <person name="Bolanos R."/>
            <person name="Fasulo D."/>
            <person name="Halldorsson B.V."/>
            <person name="Hannenhalli S."/>
            <person name="Turner R."/>
            <person name="Yooseph S."/>
            <person name="Lu F."/>
            <person name="Nusskern D.R."/>
            <person name="Shue B.C."/>
            <person name="Zheng X.H."/>
            <person name="Zhong F."/>
            <person name="Delcher A.L."/>
            <person name="Huson D.H."/>
            <person name="Kravitz S.A."/>
            <person name="Mouchard L."/>
            <person name="Reinert K."/>
            <person name="Remington K.A."/>
            <person name="Clark A.G."/>
            <person name="Waterman M.S."/>
            <person name="Eichler E.E."/>
            <person name="Adams M.D."/>
            <person name="Hunkapiller M.W."/>
            <person name="Myers E.W."/>
            <person name="Venter J.C."/>
        </authorList>
    </citation>
    <scope>NUCLEOTIDE SEQUENCE [LARGE SCALE GENOMIC DNA]</scope>
</reference>
<reference key="4">
    <citation type="journal article" date="2007" name="Glycobiology">
        <title>Siglec-15: an immune system Siglec conserved throughout vertebrate evolution.</title>
        <authorList>
            <person name="Angata T."/>
            <person name="Tabuchi Y."/>
            <person name="Nakamura K."/>
            <person name="Nakamura M."/>
        </authorList>
    </citation>
    <scope>FUNCTION</scope>
    <scope>INTERACTION WITH TYROBP AND HCST</scope>
    <scope>MUTAGENESIS OF ARG-143 AND LYS-274</scope>
</reference>
<reference key="5">
    <citation type="journal article" date="2014" name="J. Proteomics">
        <title>An enzyme assisted RP-RPLC approach for in-depth analysis of human liver phosphoproteome.</title>
        <authorList>
            <person name="Bian Y."/>
            <person name="Song C."/>
            <person name="Cheng K."/>
            <person name="Dong M."/>
            <person name="Wang F."/>
            <person name="Huang J."/>
            <person name="Sun D."/>
            <person name="Wang L."/>
            <person name="Ye M."/>
            <person name="Zou H."/>
        </authorList>
    </citation>
    <scope>IDENTIFICATION BY MASS SPECTROMETRY [LARGE SCALE ANALYSIS]</scope>
    <source>
        <tissue>Liver</tissue>
    </source>
</reference>
<organism>
    <name type="scientific">Homo sapiens</name>
    <name type="common">Human</name>
    <dbReference type="NCBI Taxonomy" id="9606"/>
    <lineage>
        <taxon>Eukaryota</taxon>
        <taxon>Metazoa</taxon>
        <taxon>Chordata</taxon>
        <taxon>Craniata</taxon>
        <taxon>Vertebrata</taxon>
        <taxon>Euteleostomi</taxon>
        <taxon>Mammalia</taxon>
        <taxon>Eutheria</taxon>
        <taxon>Euarchontoglires</taxon>
        <taxon>Primates</taxon>
        <taxon>Haplorrhini</taxon>
        <taxon>Catarrhini</taxon>
        <taxon>Hominidae</taxon>
        <taxon>Homo</taxon>
    </lineage>
</organism>
<feature type="signal peptide" evidence="2">
    <location>
        <begin position="1"/>
        <end position="19"/>
    </location>
</feature>
<feature type="chain" id="PRO_0000294369" description="Sialic acid-binding Ig-like lectin 15">
    <location>
        <begin position="20"/>
        <end position="328"/>
    </location>
</feature>
<feature type="topological domain" description="Extracellular" evidence="2">
    <location>
        <begin position="20"/>
        <end position="263"/>
    </location>
</feature>
<feature type="transmembrane region" description="Helical" evidence="2">
    <location>
        <begin position="264"/>
        <end position="284"/>
    </location>
</feature>
<feature type="topological domain" description="Cytoplasmic" evidence="2">
    <location>
        <begin position="285"/>
        <end position="328"/>
    </location>
</feature>
<feature type="domain" description="Ig-like V-type">
    <location>
        <begin position="40"/>
        <end position="158"/>
    </location>
</feature>
<feature type="domain" description="Ig-like C2-type">
    <location>
        <begin position="168"/>
        <end position="251"/>
    </location>
</feature>
<feature type="region of interest" description="Disordered" evidence="4">
    <location>
        <begin position="289"/>
        <end position="328"/>
    </location>
</feature>
<feature type="compositionally biased region" description="Polar residues" evidence="4">
    <location>
        <begin position="301"/>
        <end position="318"/>
    </location>
</feature>
<feature type="binding site" evidence="1">
    <location>
        <position position="143"/>
    </location>
    <ligand>
        <name>N-acetylneuraminate</name>
        <dbReference type="ChEBI" id="CHEBI:35418"/>
    </ligand>
</feature>
<feature type="glycosylation site" description="N-linked (GlcNAc...) asparagine" evidence="2">
    <location>
        <position position="172"/>
    </location>
</feature>
<feature type="disulfide bond" evidence="3">
    <location>
        <begin position="64"/>
        <end position="142"/>
    </location>
</feature>
<feature type="disulfide bond" evidence="3">
    <location>
        <begin position="95"/>
        <end position="104"/>
    </location>
</feature>
<feature type="disulfide bond" evidence="3">
    <location>
        <begin position="187"/>
        <end position="237"/>
    </location>
</feature>
<feature type="splice variant" id="VSP_056817" description="In isoform 2." evidence="6">
    <original>MEKSIWLLACLA</original>
    <variation>MTATRAATASGS</variation>
    <location>
        <begin position="1"/>
        <end position="12"/>
    </location>
</feature>
<feature type="splice variant" id="VSP_056818" description="In isoform 2." evidence="6">
    <location>
        <begin position="13"/>
        <end position="166"/>
    </location>
</feature>
<feature type="sequence variant" id="VAR_033174" description="In dbSNP:rs2919643.">
    <original>F</original>
    <variation>L</variation>
    <location>
        <position position="273"/>
    </location>
</feature>
<feature type="mutagenesis site" description="Abrogates glycan-binding." evidence="5">
    <original>R</original>
    <variation>A</variation>
    <location>
        <position position="143"/>
    </location>
</feature>
<feature type="mutagenesis site" description="Abrogates interaction with HCST and TYROBP." evidence="5">
    <original>K</original>
    <variation>A</variation>
    <location>
        <position position="274"/>
    </location>
</feature>
<feature type="strand" evidence="8">
    <location>
        <begin position="45"/>
        <end position="47"/>
    </location>
</feature>
<feature type="strand" evidence="8">
    <location>
        <begin position="50"/>
        <end position="55"/>
    </location>
</feature>
<feature type="strand" evidence="8">
    <location>
        <begin position="60"/>
        <end position="62"/>
    </location>
</feature>
<feature type="strand" evidence="8">
    <location>
        <begin position="65"/>
        <end position="67"/>
    </location>
</feature>
<feature type="strand" evidence="8">
    <location>
        <begin position="77"/>
        <end position="85"/>
    </location>
</feature>
<feature type="turn" evidence="8">
    <location>
        <begin position="86"/>
        <end position="88"/>
    </location>
</feature>
<feature type="strand" evidence="8">
    <location>
        <begin position="91"/>
        <end position="97"/>
    </location>
</feature>
<feature type="strand" evidence="8">
    <location>
        <begin position="104"/>
        <end position="109"/>
    </location>
</feature>
<feature type="helix" evidence="8">
    <location>
        <begin position="110"/>
        <end position="112"/>
    </location>
</feature>
<feature type="strand" evidence="8">
    <location>
        <begin position="114"/>
        <end position="116"/>
    </location>
</feature>
<feature type="helix" evidence="8">
    <location>
        <begin position="120"/>
        <end position="122"/>
    </location>
</feature>
<feature type="strand" evidence="8">
    <location>
        <begin position="127"/>
        <end position="129"/>
    </location>
</feature>
<feature type="helix" evidence="8">
    <location>
        <begin position="134"/>
        <end position="136"/>
    </location>
</feature>
<feature type="strand" evidence="8">
    <location>
        <begin position="138"/>
        <end position="149"/>
    </location>
</feature>
<feature type="strand" evidence="8">
    <location>
        <begin position="152"/>
        <end position="155"/>
    </location>
</feature>
<feature type="strand" evidence="8">
    <location>
        <begin position="160"/>
        <end position="165"/>
    </location>
</feature>
<proteinExistence type="evidence at protein level"/>
<accession>Q6ZMC9</accession>
<accession>A8K2Y5</accession>
<accession>B4DVQ9</accession>
<keyword id="KW-0002">3D-structure</keyword>
<keyword id="KW-0025">Alternative splicing</keyword>
<keyword id="KW-1015">Disulfide bond</keyword>
<keyword id="KW-0325">Glycoprotein</keyword>
<keyword id="KW-0393">Immunoglobulin domain</keyword>
<keyword id="KW-0472">Membrane</keyword>
<keyword id="KW-1267">Proteomics identification</keyword>
<keyword id="KW-1185">Reference proteome</keyword>
<keyword id="KW-0732">Signal</keyword>
<keyword id="KW-0812">Transmembrane</keyword>
<keyword id="KW-1133">Transmembrane helix</keyword>
<sequence>MEKSIWLLACLAWVLPTGSFVRTKIDTTENLLNTEVHSSPAQRWSMQVPPEVSAEAGDAAVLPCTFTHPHRHYDGPLTAIWRAGEPYAGPQVFRCAAARGSELCQTALSLHGRFRLLGNPRRNDLSLRVERLALADDRRYFCRVEFAGDVHDRYESRHGVRLHVTAAPRIVNISVLPSPAHAFRALCTAEGEPPPALAWSGPALGNSLAAVRSPREGHGHLVTAELPALTHDGRYTCTAANSLGRSEASVYLFRFHGASGASTVALLLGALGFKALLLLGVLAARAARRRPEHLDTPDTPPRSQAQESNYENLSQMNPRSPPATMCSP</sequence>
<protein>
    <recommendedName>
        <fullName>Sialic acid-binding Ig-like lectin 15</fullName>
        <shortName>Siglec-15</shortName>
    </recommendedName>
    <alternativeName>
        <fullName>CD33 antigen-like 3</fullName>
    </alternativeName>
</protein>
<gene>
    <name type="primary">SIGLEC15</name>
    <name type="synonym">CD33L3</name>
</gene>
<comment type="function">
    <text evidence="5">Binds sialylated glycoproteins.</text>
</comment>
<comment type="subunit">
    <text evidence="5">Interacts with TYROBP and HCST.</text>
</comment>
<comment type="subcellular location">
    <subcellularLocation>
        <location>Membrane</location>
        <topology>Single-pass type I membrane protein</topology>
    </subcellularLocation>
</comment>
<comment type="alternative products">
    <event type="alternative splicing"/>
    <isoform>
        <id>Q6ZMC9-1</id>
        <name>1</name>
        <sequence type="displayed"/>
    </isoform>
    <isoform>
        <id>Q6ZMC9-2</id>
        <name>2</name>
        <sequence type="described" ref="VSP_056817 VSP_056818"/>
    </isoform>
</comment>
<comment type="tissue specificity">
    <text>Expressed in macrophage and/or dendritic cells of spleen and lymph nodes.</text>
</comment>
<comment type="similarity">
    <text evidence="7">Belongs to the immunoglobulin superfamily. SIGLEC (sialic acid binding Ig-like lectin) family.</text>
</comment>